<feature type="chain" id="PRO_1000191473" description="Lipid-A-disaccharide synthase">
    <location>
        <begin position="1"/>
        <end position="381"/>
    </location>
</feature>
<reference key="1">
    <citation type="journal article" date="2008" name="Environ. Microbiol.">
        <title>The genome of Erwinia tasmaniensis strain Et1/99, a non-pathogenic bacterium in the genus Erwinia.</title>
        <authorList>
            <person name="Kube M."/>
            <person name="Migdoll A.M."/>
            <person name="Mueller I."/>
            <person name="Kuhl H."/>
            <person name="Beck A."/>
            <person name="Reinhardt R."/>
            <person name="Geider K."/>
        </authorList>
    </citation>
    <scope>NUCLEOTIDE SEQUENCE [LARGE SCALE GENOMIC DNA]</scope>
    <source>
        <strain>DSM 17950 / CFBP 7177 / CIP 109463 / NCPPB 4357 / Et1/99</strain>
    </source>
</reference>
<evidence type="ECO:0000255" key="1">
    <source>
        <dbReference type="HAMAP-Rule" id="MF_00392"/>
    </source>
</evidence>
<proteinExistence type="inferred from homology"/>
<protein>
    <recommendedName>
        <fullName evidence="1">Lipid-A-disaccharide synthase</fullName>
        <ecNumber evidence="1">2.4.1.182</ecNumber>
    </recommendedName>
</protein>
<dbReference type="EC" id="2.4.1.182" evidence="1"/>
<dbReference type="EMBL" id="CU468135">
    <property type="protein sequence ID" value="CAO95949.1"/>
    <property type="molecule type" value="Genomic_DNA"/>
</dbReference>
<dbReference type="RefSeq" id="WP_012440651.1">
    <property type="nucleotide sequence ID" value="NC_010694.1"/>
</dbReference>
<dbReference type="SMR" id="B2VHX9"/>
<dbReference type="STRING" id="465817.ETA_09030"/>
<dbReference type="CAZy" id="GT19">
    <property type="family name" value="Glycosyltransferase Family 19"/>
</dbReference>
<dbReference type="KEGG" id="eta:ETA_09030"/>
<dbReference type="eggNOG" id="COG0763">
    <property type="taxonomic scope" value="Bacteria"/>
</dbReference>
<dbReference type="HOGENOM" id="CLU_036577_3_0_6"/>
<dbReference type="OrthoDB" id="9801642at2"/>
<dbReference type="UniPathway" id="UPA00359">
    <property type="reaction ID" value="UER00481"/>
</dbReference>
<dbReference type="Proteomes" id="UP000001726">
    <property type="component" value="Chromosome"/>
</dbReference>
<dbReference type="GO" id="GO:0016020">
    <property type="term" value="C:membrane"/>
    <property type="evidence" value="ECO:0007669"/>
    <property type="project" value="GOC"/>
</dbReference>
<dbReference type="GO" id="GO:0008915">
    <property type="term" value="F:lipid-A-disaccharide synthase activity"/>
    <property type="evidence" value="ECO:0007669"/>
    <property type="project" value="UniProtKB-UniRule"/>
</dbReference>
<dbReference type="GO" id="GO:0005543">
    <property type="term" value="F:phospholipid binding"/>
    <property type="evidence" value="ECO:0007669"/>
    <property type="project" value="TreeGrafter"/>
</dbReference>
<dbReference type="GO" id="GO:0009245">
    <property type="term" value="P:lipid A biosynthetic process"/>
    <property type="evidence" value="ECO:0007669"/>
    <property type="project" value="UniProtKB-UniRule"/>
</dbReference>
<dbReference type="CDD" id="cd01635">
    <property type="entry name" value="Glycosyltransferase_GTB-type"/>
    <property type="match status" value="1"/>
</dbReference>
<dbReference type="HAMAP" id="MF_00392">
    <property type="entry name" value="LpxB"/>
    <property type="match status" value="1"/>
</dbReference>
<dbReference type="InterPro" id="IPR003835">
    <property type="entry name" value="Glyco_trans_19"/>
</dbReference>
<dbReference type="NCBIfam" id="TIGR00215">
    <property type="entry name" value="lpxB"/>
    <property type="match status" value="1"/>
</dbReference>
<dbReference type="PANTHER" id="PTHR30372">
    <property type="entry name" value="LIPID-A-DISACCHARIDE SYNTHASE"/>
    <property type="match status" value="1"/>
</dbReference>
<dbReference type="PANTHER" id="PTHR30372:SF4">
    <property type="entry name" value="LIPID-A-DISACCHARIDE SYNTHASE, MITOCHONDRIAL-RELATED"/>
    <property type="match status" value="1"/>
</dbReference>
<dbReference type="Pfam" id="PF02684">
    <property type="entry name" value="LpxB"/>
    <property type="match status" value="1"/>
</dbReference>
<dbReference type="SUPFAM" id="SSF53756">
    <property type="entry name" value="UDP-Glycosyltransferase/glycogen phosphorylase"/>
    <property type="match status" value="1"/>
</dbReference>
<comment type="function">
    <text evidence="1">Condensation of UDP-2,3-diacylglucosamine and 2,3-diacylglucosamine-1-phosphate to form lipid A disaccharide, a precursor of lipid A, a phosphorylated glycolipid that anchors the lipopolysaccharide to the outer membrane of the cell.</text>
</comment>
<comment type="catalytic activity">
    <reaction evidence="1">
        <text>2-N,3-O-bis[(3R)-3-hydroxytetradecanoyl]-alpha-D-glucosaminyl 1-phosphate + UDP-2-N,3-O-bis[(3R)-3-hydroxytetradecanoyl]-alpha-D-glucosamine = lipid A disaccharide (E. coli) + UDP + H(+)</text>
        <dbReference type="Rhea" id="RHEA:22668"/>
        <dbReference type="ChEBI" id="CHEBI:15378"/>
        <dbReference type="ChEBI" id="CHEBI:57957"/>
        <dbReference type="ChEBI" id="CHEBI:58223"/>
        <dbReference type="ChEBI" id="CHEBI:58466"/>
        <dbReference type="ChEBI" id="CHEBI:78847"/>
    </reaction>
</comment>
<comment type="catalytic activity">
    <reaction evidence="1">
        <text>a lipid X + a UDP-2-N,3-O-bis[(3R)-3-hydroxyacyl]-alpha-D-glucosamine = a lipid A disaccharide + UDP + H(+)</text>
        <dbReference type="Rhea" id="RHEA:67828"/>
        <dbReference type="ChEBI" id="CHEBI:15378"/>
        <dbReference type="ChEBI" id="CHEBI:58223"/>
        <dbReference type="ChEBI" id="CHEBI:137748"/>
        <dbReference type="ChEBI" id="CHEBI:176338"/>
        <dbReference type="ChEBI" id="CHEBI:176343"/>
        <dbReference type="EC" id="2.4.1.182"/>
    </reaction>
</comment>
<comment type="pathway">
    <text evidence="1">Glycolipid biosynthesis; lipid IV(A) biosynthesis; lipid IV(A) from (3R)-3-hydroxytetradecanoyl-[acyl-carrier-protein] and UDP-N-acetyl-alpha-D-glucosamine: step 5/6.</text>
</comment>
<comment type="similarity">
    <text evidence="1">Belongs to the LpxB family.</text>
</comment>
<sequence>MPKHPLTIALVAGETSGDILGAGLIRALKEKHPDARFVGVAGPLMQSEGCEAWYEMEELAVMGIVEVLGRLRRLLHIRRDLTRRFTALKPDVFVGIDAPDFNITLEGRLKQQGIRTIHYVSPSVWAWRQKRVFKIGRATDLVLAFLPFEKAFYDRFNVPCRFIGHTMADAMPIVPDKQAARRELGIAPQALCLALLPGSRSAEVEMLSADFLKTAMLLREKYPQLEIVVPLVNPRRRAQFEAIKAEVAADLPMHLLDGKGREAMLASDAALLASGTAALECMLAKCPMVVGYRMKPFTFWLAKRLVKTDYVSLPNLLAGRELVPELLQDECQPQRLAAALEPLLAQGETRDTLLATFAELHHQIRWNADEQAAAAVLELCR</sequence>
<gene>
    <name evidence="1" type="primary">lpxB</name>
    <name type="ordered locus">ETA_09030</name>
</gene>
<accession>B2VHX9</accession>
<organism>
    <name type="scientific">Erwinia tasmaniensis (strain DSM 17950 / CFBP 7177 / CIP 109463 / NCPPB 4357 / Et1/99)</name>
    <dbReference type="NCBI Taxonomy" id="465817"/>
    <lineage>
        <taxon>Bacteria</taxon>
        <taxon>Pseudomonadati</taxon>
        <taxon>Pseudomonadota</taxon>
        <taxon>Gammaproteobacteria</taxon>
        <taxon>Enterobacterales</taxon>
        <taxon>Erwiniaceae</taxon>
        <taxon>Erwinia</taxon>
    </lineage>
</organism>
<keyword id="KW-0328">Glycosyltransferase</keyword>
<keyword id="KW-0441">Lipid A biosynthesis</keyword>
<keyword id="KW-0444">Lipid biosynthesis</keyword>
<keyword id="KW-0443">Lipid metabolism</keyword>
<keyword id="KW-1185">Reference proteome</keyword>
<keyword id="KW-0808">Transferase</keyword>
<name>LPXB_ERWT9</name>